<keyword id="KW-0071">Autoinducer synthesis</keyword>
<keyword id="KW-0408">Iron</keyword>
<keyword id="KW-0456">Lyase</keyword>
<keyword id="KW-0479">Metal-binding</keyword>
<keyword id="KW-0673">Quorum sensing</keyword>
<keyword id="KW-1185">Reference proteome</keyword>
<reference key="1">
    <citation type="journal article" date="2003" name="Nature">
        <title>Genome sequence of Bacillus cereus and comparative analysis with Bacillus anthracis.</title>
        <authorList>
            <person name="Ivanova N."/>
            <person name="Sorokin A."/>
            <person name="Anderson I."/>
            <person name="Galleron N."/>
            <person name="Candelon B."/>
            <person name="Kapatral V."/>
            <person name="Bhattacharyya A."/>
            <person name="Reznik G."/>
            <person name="Mikhailova N."/>
            <person name="Lapidus A."/>
            <person name="Chu L."/>
            <person name="Mazur M."/>
            <person name="Goltsman E."/>
            <person name="Larsen N."/>
            <person name="D'Souza M."/>
            <person name="Walunas T."/>
            <person name="Grechkin Y."/>
            <person name="Pusch G."/>
            <person name="Haselkorn R."/>
            <person name="Fonstein M."/>
            <person name="Ehrlich S.D."/>
            <person name="Overbeek R."/>
            <person name="Kyrpides N.C."/>
        </authorList>
    </citation>
    <scope>NUCLEOTIDE SEQUENCE [LARGE SCALE GENOMIC DNA]</scope>
    <source>
        <strain>ATCC 14579 / DSM 31 / CCUG 7414 / JCM 2152 / NBRC 15305 / NCIMB 9373 / NCTC 2599 / NRRL B-3711</strain>
    </source>
</reference>
<protein>
    <recommendedName>
        <fullName evidence="1">S-ribosylhomocysteine lyase</fullName>
        <ecNumber evidence="1">4.4.1.21</ecNumber>
    </recommendedName>
    <alternativeName>
        <fullName evidence="1">AI-2 synthesis protein</fullName>
    </alternativeName>
    <alternativeName>
        <fullName evidence="1">Autoinducer-2 production protein LuxS</fullName>
    </alternativeName>
</protein>
<gene>
    <name evidence="1" type="primary">luxS</name>
    <name type="ordered locus">BC_4789</name>
</gene>
<accession>Q816N5</accession>
<sequence length="157" mass="17855">MPSVESFELDHTIVKAPYVRHCGVHNVGSDGIVNKFDIRFCQPNKQAMKPDVIHTLEHLLAFNLRKYIDRYPHFDIIDISPMGCQTGYYLVVSGTPTVREIIDLLELTLKDAVQITEIPAANETQCGQAKLHDLEGAQRLMNFWLSQDKDELEKVFG</sequence>
<comment type="function">
    <text evidence="1">Involved in the synthesis of autoinducer 2 (AI-2) which is secreted by bacteria and is used to communicate both the cell density and the metabolic potential of the environment. The regulation of gene expression in response to changes in cell density is called quorum sensing. Catalyzes the transformation of S-ribosylhomocysteine (RHC) to homocysteine (HC) and 4,5-dihydroxy-2,3-pentadione (DPD).</text>
</comment>
<comment type="catalytic activity">
    <reaction evidence="1">
        <text>S-(5-deoxy-D-ribos-5-yl)-L-homocysteine = (S)-4,5-dihydroxypentane-2,3-dione + L-homocysteine</text>
        <dbReference type="Rhea" id="RHEA:17753"/>
        <dbReference type="ChEBI" id="CHEBI:29484"/>
        <dbReference type="ChEBI" id="CHEBI:58195"/>
        <dbReference type="ChEBI" id="CHEBI:58199"/>
        <dbReference type="EC" id="4.4.1.21"/>
    </reaction>
</comment>
<comment type="cofactor">
    <cofactor evidence="1">
        <name>Fe cation</name>
        <dbReference type="ChEBI" id="CHEBI:24875"/>
    </cofactor>
    <text evidence="1">Binds 1 Fe cation per subunit.</text>
</comment>
<comment type="subunit">
    <text evidence="1">Homodimer.</text>
</comment>
<comment type="similarity">
    <text evidence="1">Belongs to the LuxS family.</text>
</comment>
<organism>
    <name type="scientific">Bacillus cereus (strain ATCC 14579 / DSM 31 / CCUG 7414 / JCM 2152 / NBRC 15305 / NCIMB 9373 / NCTC 2599 / NRRL B-3711)</name>
    <dbReference type="NCBI Taxonomy" id="226900"/>
    <lineage>
        <taxon>Bacteria</taxon>
        <taxon>Bacillati</taxon>
        <taxon>Bacillota</taxon>
        <taxon>Bacilli</taxon>
        <taxon>Bacillales</taxon>
        <taxon>Bacillaceae</taxon>
        <taxon>Bacillus</taxon>
        <taxon>Bacillus cereus group</taxon>
    </lineage>
</organism>
<feature type="chain" id="PRO_0000172206" description="S-ribosylhomocysteine lyase">
    <location>
        <begin position="1"/>
        <end position="157"/>
    </location>
</feature>
<feature type="binding site" evidence="1">
    <location>
        <position position="54"/>
    </location>
    <ligand>
        <name>Fe cation</name>
        <dbReference type="ChEBI" id="CHEBI:24875"/>
    </ligand>
</feature>
<feature type="binding site" evidence="1">
    <location>
        <position position="58"/>
    </location>
    <ligand>
        <name>Fe cation</name>
        <dbReference type="ChEBI" id="CHEBI:24875"/>
    </ligand>
</feature>
<feature type="binding site" evidence="1">
    <location>
        <position position="126"/>
    </location>
    <ligand>
        <name>Fe cation</name>
        <dbReference type="ChEBI" id="CHEBI:24875"/>
    </ligand>
</feature>
<dbReference type="EC" id="4.4.1.21" evidence="1"/>
<dbReference type="EMBL" id="AE016877">
    <property type="protein sequence ID" value="AAP11692.1"/>
    <property type="molecule type" value="Genomic_DNA"/>
</dbReference>
<dbReference type="RefSeq" id="NP_834491.1">
    <property type="nucleotide sequence ID" value="NC_004722.1"/>
</dbReference>
<dbReference type="RefSeq" id="WP_001141371.1">
    <property type="nucleotide sequence ID" value="NZ_CP138336.1"/>
</dbReference>
<dbReference type="SMR" id="Q816N5"/>
<dbReference type="STRING" id="226900.BC_4789"/>
<dbReference type="GeneID" id="92884602"/>
<dbReference type="KEGG" id="bce:BC4789"/>
<dbReference type="PATRIC" id="fig|226900.8.peg.4956"/>
<dbReference type="HOGENOM" id="CLU_107531_2_0_9"/>
<dbReference type="OrthoDB" id="9788129at2"/>
<dbReference type="BRENDA" id="4.4.1.21">
    <property type="organism ID" value="648"/>
</dbReference>
<dbReference type="PRO" id="PR:Q816N5"/>
<dbReference type="Proteomes" id="UP000001417">
    <property type="component" value="Chromosome"/>
</dbReference>
<dbReference type="GO" id="GO:0005829">
    <property type="term" value="C:cytosol"/>
    <property type="evidence" value="ECO:0000318"/>
    <property type="project" value="GO_Central"/>
</dbReference>
<dbReference type="GO" id="GO:0005506">
    <property type="term" value="F:iron ion binding"/>
    <property type="evidence" value="ECO:0007669"/>
    <property type="project" value="InterPro"/>
</dbReference>
<dbReference type="GO" id="GO:0043768">
    <property type="term" value="F:S-ribosylhomocysteine lyase activity"/>
    <property type="evidence" value="ECO:0000318"/>
    <property type="project" value="GO_Central"/>
</dbReference>
<dbReference type="GO" id="GO:0019284">
    <property type="term" value="P:L-methionine salvage from S-adenosylmethionine"/>
    <property type="evidence" value="ECO:0000318"/>
    <property type="project" value="GO_Central"/>
</dbReference>
<dbReference type="GO" id="GO:0009372">
    <property type="term" value="P:quorum sensing"/>
    <property type="evidence" value="ECO:0007669"/>
    <property type="project" value="UniProtKB-UniRule"/>
</dbReference>
<dbReference type="Gene3D" id="3.30.1360.80">
    <property type="entry name" value="S-ribosylhomocysteinase (LuxS)"/>
    <property type="match status" value="1"/>
</dbReference>
<dbReference type="HAMAP" id="MF_00091">
    <property type="entry name" value="LuxS"/>
    <property type="match status" value="1"/>
</dbReference>
<dbReference type="InterPro" id="IPR037005">
    <property type="entry name" value="LuxS_sf"/>
</dbReference>
<dbReference type="InterPro" id="IPR011249">
    <property type="entry name" value="Metalloenz_LuxS/M16"/>
</dbReference>
<dbReference type="InterPro" id="IPR003815">
    <property type="entry name" value="S-ribosylhomocysteinase"/>
</dbReference>
<dbReference type="NCBIfam" id="NF002603">
    <property type="entry name" value="PRK02260.1-3"/>
    <property type="match status" value="1"/>
</dbReference>
<dbReference type="PANTHER" id="PTHR35799">
    <property type="entry name" value="S-RIBOSYLHOMOCYSTEINE LYASE"/>
    <property type="match status" value="1"/>
</dbReference>
<dbReference type="PANTHER" id="PTHR35799:SF1">
    <property type="entry name" value="S-RIBOSYLHOMOCYSTEINE LYASE"/>
    <property type="match status" value="1"/>
</dbReference>
<dbReference type="Pfam" id="PF02664">
    <property type="entry name" value="LuxS"/>
    <property type="match status" value="1"/>
</dbReference>
<dbReference type="PIRSF" id="PIRSF006160">
    <property type="entry name" value="AI2"/>
    <property type="match status" value="1"/>
</dbReference>
<dbReference type="PRINTS" id="PR01487">
    <property type="entry name" value="LUXSPROTEIN"/>
</dbReference>
<dbReference type="SUPFAM" id="SSF63411">
    <property type="entry name" value="LuxS/MPP-like metallohydrolase"/>
    <property type="match status" value="1"/>
</dbReference>
<name>LUXS_BACCR</name>
<evidence type="ECO:0000255" key="1">
    <source>
        <dbReference type="HAMAP-Rule" id="MF_00091"/>
    </source>
</evidence>
<proteinExistence type="inferred from homology"/>